<keyword id="KW-0233">DNA recombination</keyword>
<keyword id="KW-0238">DNA-binding</keyword>
<keyword id="KW-0814">Transposable element</keyword>
<keyword id="KW-0815">Transposition</keyword>
<name>TRA0_MYCSM</name>
<protein>
    <recommendedName>
        <fullName>Transposase for insertion sequence element IS6120</fullName>
    </recommendedName>
</protein>
<accession>P35883</accession>
<sequence>MSEVLPLLYLHGLSSNDFTPALEQFLGSGAGLSASTITRLTAQWQDEARAFGARDLSATDYVYLWVDGIHLKVRLDQEKLCLLVMLGVRADGRKELVAITDGYRESAESWADLLRDCKRRGMTAPVLAIGDGALGFWKAVREVFPATKEQRCWFHKQANVLAALPKSAHPSALAAIKEIYNAEDIDKAQIAVKAFEADFGAKYPKAVAKITDDLDVLLEFYKYPAEHWIHLRTTNPIESTFATVRLRTKVTKGPGSRAAGLAMAYKLIDAAAARWRAVNAPHLVALVRAGAVFHKGRLLERPTDITPPTSPSDGGQHAGTEVA</sequence>
<comment type="function">
    <text>Required for the transposition of the insertion element.</text>
</comment>
<comment type="similarity">
    <text evidence="2">Belongs to the transposase mutator family.</text>
</comment>
<organism>
    <name type="scientific">Mycolicibacterium smegmatis</name>
    <name type="common">Mycobacterium smegmatis</name>
    <dbReference type="NCBI Taxonomy" id="1772"/>
    <lineage>
        <taxon>Bacteria</taxon>
        <taxon>Bacillati</taxon>
        <taxon>Actinomycetota</taxon>
        <taxon>Actinomycetes</taxon>
        <taxon>Mycobacteriales</taxon>
        <taxon>Mycobacteriaceae</taxon>
        <taxon>Mycolicibacterium</taxon>
    </lineage>
</organism>
<feature type="chain" id="PRO_0000211351" description="Transposase for insertion sequence element IS6120">
    <location>
        <begin position="1"/>
        <end position="323"/>
    </location>
</feature>
<feature type="region of interest" description="Disordered" evidence="1">
    <location>
        <begin position="300"/>
        <end position="323"/>
    </location>
</feature>
<feature type="compositionally biased region" description="Low complexity" evidence="1">
    <location>
        <begin position="304"/>
        <end position="313"/>
    </location>
</feature>
<dbReference type="EMBL" id="M69182">
    <property type="protein sequence ID" value="AAA25034.1"/>
    <property type="molecule type" value="Genomic_DNA"/>
</dbReference>
<dbReference type="PIR" id="S20032">
    <property type="entry name" value="S20032"/>
</dbReference>
<dbReference type="SMR" id="P35883"/>
<dbReference type="GO" id="GO:0003677">
    <property type="term" value="F:DNA binding"/>
    <property type="evidence" value="ECO:0007669"/>
    <property type="project" value="UniProtKB-KW"/>
</dbReference>
<dbReference type="GO" id="GO:0004803">
    <property type="term" value="F:transposase activity"/>
    <property type="evidence" value="ECO:0007669"/>
    <property type="project" value="InterPro"/>
</dbReference>
<dbReference type="GO" id="GO:0006313">
    <property type="term" value="P:DNA transposition"/>
    <property type="evidence" value="ECO:0007669"/>
    <property type="project" value="InterPro"/>
</dbReference>
<dbReference type="InterPro" id="IPR001207">
    <property type="entry name" value="Transposase_mutator"/>
</dbReference>
<dbReference type="NCBIfam" id="NF033543">
    <property type="entry name" value="transpos_IS256"/>
    <property type="match status" value="1"/>
</dbReference>
<dbReference type="PANTHER" id="PTHR33217:SF9">
    <property type="entry name" value="MUTATOR FAMILY TRANSPOSASE"/>
    <property type="match status" value="1"/>
</dbReference>
<dbReference type="PANTHER" id="PTHR33217">
    <property type="entry name" value="TRANSPOSASE FOR INSERTION SEQUENCE ELEMENT IS1081"/>
    <property type="match status" value="1"/>
</dbReference>
<dbReference type="Pfam" id="PF00872">
    <property type="entry name" value="Transposase_mut"/>
    <property type="match status" value="1"/>
</dbReference>
<dbReference type="PROSITE" id="PS01007">
    <property type="entry name" value="TRANSPOSASE_MUTATOR"/>
    <property type="match status" value="1"/>
</dbReference>
<evidence type="ECO:0000256" key="1">
    <source>
        <dbReference type="SAM" id="MobiDB-lite"/>
    </source>
</evidence>
<evidence type="ECO:0000305" key="2"/>
<proteinExistence type="inferred from homology"/>
<reference key="1">
    <citation type="journal article" date="1992" name="Mol. Microbiol.">
        <title>Isolation and analysis of IS6120, a new insertion sequence from Mycobacterium smegmatis.</title>
        <authorList>
            <person name="Guilhot C."/>
            <person name="Gicquel B."/>
            <person name="Davies J."/>
            <person name="Martin C."/>
        </authorList>
    </citation>
    <scope>NUCLEOTIDE SEQUENCE [GENOMIC DNA]</scope>
</reference>